<comment type="function">
    <text evidence="1">Binds together with bS18 to 16S ribosomal RNA.</text>
</comment>
<comment type="similarity">
    <text evidence="1">Belongs to the bacterial ribosomal protein bS6 family.</text>
</comment>
<gene>
    <name evidence="1" type="primary">rpsF</name>
    <name type="ordered locus">RBAM_038000</name>
</gene>
<evidence type="ECO:0000255" key="1">
    <source>
        <dbReference type="HAMAP-Rule" id="MF_00360"/>
    </source>
</evidence>
<evidence type="ECO:0000305" key="2"/>
<sequence>MKKYEVMYIIRPNIDEESKKAVIERFNNVLTSNGAEITGTKDWGKRRLAYEINDFRDGFYQILNVQSEAAAVAEFDRLAKISDDIIRHIVVKEEE</sequence>
<dbReference type="EMBL" id="CP000560">
    <property type="protein sequence ID" value="ABS76125.1"/>
    <property type="molecule type" value="Genomic_DNA"/>
</dbReference>
<dbReference type="RefSeq" id="WP_004392977.1">
    <property type="nucleotide sequence ID" value="NC_009725.2"/>
</dbReference>
<dbReference type="SMR" id="A7ZAU9"/>
<dbReference type="GeneID" id="93082934"/>
<dbReference type="KEGG" id="bay:RBAM_038000"/>
<dbReference type="HOGENOM" id="CLU_113441_5_3_9"/>
<dbReference type="Proteomes" id="UP000001120">
    <property type="component" value="Chromosome"/>
</dbReference>
<dbReference type="GO" id="GO:0005737">
    <property type="term" value="C:cytoplasm"/>
    <property type="evidence" value="ECO:0007669"/>
    <property type="project" value="UniProtKB-ARBA"/>
</dbReference>
<dbReference type="GO" id="GO:1990904">
    <property type="term" value="C:ribonucleoprotein complex"/>
    <property type="evidence" value="ECO:0007669"/>
    <property type="project" value="UniProtKB-KW"/>
</dbReference>
<dbReference type="GO" id="GO:0005840">
    <property type="term" value="C:ribosome"/>
    <property type="evidence" value="ECO:0007669"/>
    <property type="project" value="UniProtKB-KW"/>
</dbReference>
<dbReference type="GO" id="GO:0070181">
    <property type="term" value="F:small ribosomal subunit rRNA binding"/>
    <property type="evidence" value="ECO:0007669"/>
    <property type="project" value="TreeGrafter"/>
</dbReference>
<dbReference type="GO" id="GO:0003735">
    <property type="term" value="F:structural constituent of ribosome"/>
    <property type="evidence" value="ECO:0007669"/>
    <property type="project" value="InterPro"/>
</dbReference>
<dbReference type="GO" id="GO:0006412">
    <property type="term" value="P:translation"/>
    <property type="evidence" value="ECO:0007669"/>
    <property type="project" value="UniProtKB-UniRule"/>
</dbReference>
<dbReference type="CDD" id="cd00473">
    <property type="entry name" value="bS6"/>
    <property type="match status" value="1"/>
</dbReference>
<dbReference type="FunFam" id="3.30.70.60:FF:000002">
    <property type="entry name" value="30S ribosomal protein S6"/>
    <property type="match status" value="1"/>
</dbReference>
<dbReference type="Gene3D" id="3.30.70.60">
    <property type="match status" value="1"/>
</dbReference>
<dbReference type="HAMAP" id="MF_00360">
    <property type="entry name" value="Ribosomal_bS6"/>
    <property type="match status" value="1"/>
</dbReference>
<dbReference type="InterPro" id="IPR000529">
    <property type="entry name" value="Ribosomal_bS6"/>
</dbReference>
<dbReference type="InterPro" id="IPR020815">
    <property type="entry name" value="Ribosomal_bS6_CS"/>
</dbReference>
<dbReference type="InterPro" id="IPR035980">
    <property type="entry name" value="Ribosomal_bS6_sf"/>
</dbReference>
<dbReference type="InterPro" id="IPR020814">
    <property type="entry name" value="Ribosomal_S6_plastid/chlpt"/>
</dbReference>
<dbReference type="InterPro" id="IPR014717">
    <property type="entry name" value="Transl_elong_EF1B/ribsomal_bS6"/>
</dbReference>
<dbReference type="NCBIfam" id="TIGR00166">
    <property type="entry name" value="S6"/>
    <property type="match status" value="1"/>
</dbReference>
<dbReference type="PANTHER" id="PTHR21011">
    <property type="entry name" value="MITOCHONDRIAL 28S RIBOSOMAL PROTEIN S6"/>
    <property type="match status" value="1"/>
</dbReference>
<dbReference type="PANTHER" id="PTHR21011:SF1">
    <property type="entry name" value="SMALL RIBOSOMAL SUBUNIT PROTEIN BS6M"/>
    <property type="match status" value="1"/>
</dbReference>
<dbReference type="Pfam" id="PF01250">
    <property type="entry name" value="Ribosomal_S6"/>
    <property type="match status" value="1"/>
</dbReference>
<dbReference type="SUPFAM" id="SSF54995">
    <property type="entry name" value="Ribosomal protein S6"/>
    <property type="match status" value="1"/>
</dbReference>
<dbReference type="PROSITE" id="PS01048">
    <property type="entry name" value="RIBOSOMAL_S6"/>
    <property type="match status" value="1"/>
</dbReference>
<organism>
    <name type="scientific">Bacillus velezensis (strain DSM 23117 / BGSC 10A6 / LMG 26770 / FZB42)</name>
    <name type="common">Bacillus amyloliquefaciens subsp. plantarum</name>
    <dbReference type="NCBI Taxonomy" id="326423"/>
    <lineage>
        <taxon>Bacteria</taxon>
        <taxon>Bacillati</taxon>
        <taxon>Bacillota</taxon>
        <taxon>Bacilli</taxon>
        <taxon>Bacillales</taxon>
        <taxon>Bacillaceae</taxon>
        <taxon>Bacillus</taxon>
        <taxon>Bacillus amyloliquefaciens group</taxon>
    </lineage>
</organism>
<name>RS6_BACVZ</name>
<keyword id="KW-0687">Ribonucleoprotein</keyword>
<keyword id="KW-0689">Ribosomal protein</keyword>
<keyword id="KW-0694">RNA-binding</keyword>
<keyword id="KW-0699">rRNA-binding</keyword>
<feature type="chain" id="PRO_1000005217" description="Small ribosomal subunit protein bS6">
    <location>
        <begin position="1"/>
        <end position="95"/>
    </location>
</feature>
<protein>
    <recommendedName>
        <fullName evidence="1">Small ribosomal subunit protein bS6</fullName>
    </recommendedName>
    <alternativeName>
        <fullName evidence="2">30S ribosomal protein S6</fullName>
    </alternativeName>
</protein>
<proteinExistence type="inferred from homology"/>
<accession>A7ZAU9</accession>
<reference key="1">
    <citation type="journal article" date="2007" name="Nat. Biotechnol.">
        <title>Comparative analysis of the complete genome sequence of the plant growth-promoting bacterium Bacillus amyloliquefaciens FZB42.</title>
        <authorList>
            <person name="Chen X.H."/>
            <person name="Koumoutsi A."/>
            <person name="Scholz R."/>
            <person name="Eisenreich A."/>
            <person name="Schneider K."/>
            <person name="Heinemeyer I."/>
            <person name="Morgenstern B."/>
            <person name="Voss B."/>
            <person name="Hess W.R."/>
            <person name="Reva O."/>
            <person name="Junge H."/>
            <person name="Voigt B."/>
            <person name="Jungblut P.R."/>
            <person name="Vater J."/>
            <person name="Suessmuth R."/>
            <person name="Liesegang H."/>
            <person name="Strittmatter A."/>
            <person name="Gottschalk G."/>
            <person name="Borriss R."/>
        </authorList>
    </citation>
    <scope>NUCLEOTIDE SEQUENCE [LARGE SCALE GENOMIC DNA]</scope>
    <source>
        <strain>DSM 23117 / BGSC 10A6 / LMG 26770 / FZB42</strain>
    </source>
</reference>